<comment type="function">
    <text evidence="1">Catalyzes the NADPH-dependent reduction of N-acetyl-5-glutamyl phosphate to yield N-acetyl-L-glutamate 5-semialdehyde.</text>
</comment>
<comment type="catalytic activity">
    <reaction evidence="1">
        <text>N-acetyl-L-glutamate 5-semialdehyde + phosphate + NADP(+) = N-acetyl-L-glutamyl 5-phosphate + NADPH + H(+)</text>
        <dbReference type="Rhea" id="RHEA:21588"/>
        <dbReference type="ChEBI" id="CHEBI:15378"/>
        <dbReference type="ChEBI" id="CHEBI:29123"/>
        <dbReference type="ChEBI" id="CHEBI:43474"/>
        <dbReference type="ChEBI" id="CHEBI:57783"/>
        <dbReference type="ChEBI" id="CHEBI:57936"/>
        <dbReference type="ChEBI" id="CHEBI:58349"/>
        <dbReference type="EC" id="1.2.1.38"/>
    </reaction>
</comment>
<comment type="pathway">
    <text evidence="1">Amino-acid biosynthesis; L-arginine biosynthesis; N(2)-acetyl-L-ornithine from L-glutamate: step 3/4.</text>
</comment>
<comment type="subcellular location">
    <subcellularLocation>
        <location evidence="1">Cytoplasm</location>
    </subcellularLocation>
</comment>
<comment type="similarity">
    <text evidence="1">Belongs to the NAGSA dehydrogenase family. Type 1 subfamily.</text>
</comment>
<proteinExistence type="inferred from homology"/>
<dbReference type="EC" id="1.2.1.38" evidence="1"/>
<dbReference type="EMBL" id="CP000753">
    <property type="protein sequence ID" value="ABS10212.1"/>
    <property type="molecule type" value="Genomic_DNA"/>
</dbReference>
<dbReference type="RefSeq" id="WP_012090490.1">
    <property type="nucleotide sequence ID" value="NC_009665.1"/>
</dbReference>
<dbReference type="SMR" id="A6WTS3"/>
<dbReference type="KEGG" id="sbm:Shew185_4095"/>
<dbReference type="HOGENOM" id="CLU_006384_0_1_6"/>
<dbReference type="UniPathway" id="UPA00068">
    <property type="reaction ID" value="UER00108"/>
</dbReference>
<dbReference type="GO" id="GO:0005737">
    <property type="term" value="C:cytoplasm"/>
    <property type="evidence" value="ECO:0007669"/>
    <property type="project" value="UniProtKB-SubCell"/>
</dbReference>
<dbReference type="GO" id="GO:0003942">
    <property type="term" value="F:N-acetyl-gamma-glutamyl-phosphate reductase activity"/>
    <property type="evidence" value="ECO:0007669"/>
    <property type="project" value="UniProtKB-UniRule"/>
</dbReference>
<dbReference type="GO" id="GO:0051287">
    <property type="term" value="F:NAD binding"/>
    <property type="evidence" value="ECO:0007669"/>
    <property type="project" value="InterPro"/>
</dbReference>
<dbReference type="GO" id="GO:0070401">
    <property type="term" value="F:NADP+ binding"/>
    <property type="evidence" value="ECO:0007669"/>
    <property type="project" value="InterPro"/>
</dbReference>
<dbReference type="GO" id="GO:0006526">
    <property type="term" value="P:L-arginine biosynthetic process"/>
    <property type="evidence" value="ECO:0007669"/>
    <property type="project" value="UniProtKB-UniRule"/>
</dbReference>
<dbReference type="CDD" id="cd23934">
    <property type="entry name" value="AGPR_1_C"/>
    <property type="match status" value="1"/>
</dbReference>
<dbReference type="CDD" id="cd17895">
    <property type="entry name" value="AGPR_1_N"/>
    <property type="match status" value="1"/>
</dbReference>
<dbReference type="FunFam" id="3.30.360.10:FF:000014">
    <property type="entry name" value="N-acetyl-gamma-glutamyl-phosphate reductase"/>
    <property type="match status" value="1"/>
</dbReference>
<dbReference type="Gene3D" id="3.30.360.10">
    <property type="entry name" value="Dihydrodipicolinate Reductase, domain 2"/>
    <property type="match status" value="1"/>
</dbReference>
<dbReference type="Gene3D" id="3.40.50.720">
    <property type="entry name" value="NAD(P)-binding Rossmann-like Domain"/>
    <property type="match status" value="1"/>
</dbReference>
<dbReference type="HAMAP" id="MF_00150">
    <property type="entry name" value="ArgC_type1"/>
    <property type="match status" value="1"/>
</dbReference>
<dbReference type="InterPro" id="IPR023013">
    <property type="entry name" value="AGPR_AS"/>
</dbReference>
<dbReference type="InterPro" id="IPR000706">
    <property type="entry name" value="AGPR_type-1"/>
</dbReference>
<dbReference type="InterPro" id="IPR036291">
    <property type="entry name" value="NAD(P)-bd_dom_sf"/>
</dbReference>
<dbReference type="InterPro" id="IPR050085">
    <property type="entry name" value="NAGSA_dehydrogenase"/>
</dbReference>
<dbReference type="InterPro" id="IPR000534">
    <property type="entry name" value="Semialdehyde_DH_NAD-bd"/>
</dbReference>
<dbReference type="NCBIfam" id="TIGR01850">
    <property type="entry name" value="argC"/>
    <property type="match status" value="1"/>
</dbReference>
<dbReference type="PANTHER" id="PTHR32338:SF10">
    <property type="entry name" value="N-ACETYL-GAMMA-GLUTAMYL-PHOSPHATE REDUCTASE, CHLOROPLASTIC-RELATED"/>
    <property type="match status" value="1"/>
</dbReference>
<dbReference type="PANTHER" id="PTHR32338">
    <property type="entry name" value="N-ACETYL-GAMMA-GLUTAMYL-PHOSPHATE REDUCTASE, CHLOROPLASTIC-RELATED-RELATED"/>
    <property type="match status" value="1"/>
</dbReference>
<dbReference type="Pfam" id="PF01118">
    <property type="entry name" value="Semialdhyde_dh"/>
    <property type="match status" value="1"/>
</dbReference>
<dbReference type="Pfam" id="PF22698">
    <property type="entry name" value="Semialdhyde_dhC_1"/>
    <property type="match status" value="1"/>
</dbReference>
<dbReference type="SMART" id="SM00859">
    <property type="entry name" value="Semialdhyde_dh"/>
    <property type="match status" value="1"/>
</dbReference>
<dbReference type="SUPFAM" id="SSF55347">
    <property type="entry name" value="Glyceraldehyde-3-phosphate dehydrogenase-like, C-terminal domain"/>
    <property type="match status" value="1"/>
</dbReference>
<dbReference type="SUPFAM" id="SSF51735">
    <property type="entry name" value="NAD(P)-binding Rossmann-fold domains"/>
    <property type="match status" value="1"/>
</dbReference>
<dbReference type="PROSITE" id="PS01224">
    <property type="entry name" value="ARGC"/>
    <property type="match status" value="1"/>
</dbReference>
<gene>
    <name evidence="1" type="primary">argC</name>
    <name type="ordered locus">Shew185_4095</name>
</gene>
<evidence type="ECO:0000255" key="1">
    <source>
        <dbReference type="HAMAP-Rule" id="MF_00150"/>
    </source>
</evidence>
<accession>A6WTS3</accession>
<feature type="chain" id="PRO_1000011057" description="N-acetyl-gamma-glutamyl-phosphate reductase">
    <location>
        <begin position="1"/>
        <end position="326"/>
    </location>
</feature>
<feature type="active site" evidence="1">
    <location>
        <position position="155"/>
    </location>
</feature>
<sequence length="326" mass="34961">MKNIAIIGASGYTGAQLTALIHAEAELTIQGLYVSENSLDKGKPLADLYPSYSHIALTLSPLSDDAKAKIVAEADAVVLATEHSVSLHLAAWFYSQGLAVFDLSGAYRFSDVAQYPKWYGFEHEYPEVLAKAVYGLAEWNAKEIAATKMIAVPGCYPTASLTALKPLASLLTSAYPVINAVSGVTGAGRKAQLQTSFCEVSLTPYGVLGHRHQPEIATQLGQEVIFTPHLGNFKRGILATITVQLKPGTTTADVAAAYSVYDQAPLVTVKHNHFPKVDDVVLTPNCHLGWKFDENSGYLVVASAIDNLMKGAASQALQCIKIHFNL</sequence>
<organism>
    <name type="scientific">Shewanella baltica (strain OS185)</name>
    <dbReference type="NCBI Taxonomy" id="402882"/>
    <lineage>
        <taxon>Bacteria</taxon>
        <taxon>Pseudomonadati</taxon>
        <taxon>Pseudomonadota</taxon>
        <taxon>Gammaproteobacteria</taxon>
        <taxon>Alteromonadales</taxon>
        <taxon>Shewanellaceae</taxon>
        <taxon>Shewanella</taxon>
    </lineage>
</organism>
<protein>
    <recommendedName>
        <fullName evidence="1">N-acetyl-gamma-glutamyl-phosphate reductase</fullName>
        <shortName evidence="1">AGPR</shortName>
        <ecNumber evidence="1">1.2.1.38</ecNumber>
    </recommendedName>
    <alternativeName>
        <fullName evidence="1">N-acetyl-glutamate semialdehyde dehydrogenase</fullName>
        <shortName evidence="1">NAGSA dehydrogenase</shortName>
    </alternativeName>
</protein>
<name>ARGC_SHEB8</name>
<keyword id="KW-0028">Amino-acid biosynthesis</keyword>
<keyword id="KW-0055">Arginine biosynthesis</keyword>
<keyword id="KW-0963">Cytoplasm</keyword>
<keyword id="KW-0521">NADP</keyword>
<keyword id="KW-0560">Oxidoreductase</keyword>
<reference key="1">
    <citation type="submission" date="2007-07" db="EMBL/GenBank/DDBJ databases">
        <title>Complete sequence of chromosome of Shewanella baltica OS185.</title>
        <authorList>
            <consortium name="US DOE Joint Genome Institute"/>
            <person name="Copeland A."/>
            <person name="Lucas S."/>
            <person name="Lapidus A."/>
            <person name="Barry K."/>
            <person name="Glavina del Rio T."/>
            <person name="Dalin E."/>
            <person name="Tice H."/>
            <person name="Pitluck S."/>
            <person name="Sims D."/>
            <person name="Brettin T."/>
            <person name="Bruce D."/>
            <person name="Detter J.C."/>
            <person name="Han C."/>
            <person name="Schmutz J."/>
            <person name="Larimer F."/>
            <person name="Land M."/>
            <person name="Hauser L."/>
            <person name="Kyrpides N."/>
            <person name="Mikhailova N."/>
            <person name="Brettar I."/>
            <person name="Rodrigues J."/>
            <person name="Konstantinidis K."/>
            <person name="Tiedje J."/>
            <person name="Richardson P."/>
        </authorList>
    </citation>
    <scope>NUCLEOTIDE SEQUENCE [LARGE SCALE GENOMIC DNA]</scope>
    <source>
        <strain>OS185</strain>
    </source>
</reference>